<organism>
    <name type="scientific">Leptothrix cholodnii (strain ATCC 51168 / LMG 8142 / SP-6)</name>
    <name type="common">Leptothrix discophora (strain SP-6)</name>
    <dbReference type="NCBI Taxonomy" id="395495"/>
    <lineage>
        <taxon>Bacteria</taxon>
        <taxon>Pseudomonadati</taxon>
        <taxon>Pseudomonadota</taxon>
        <taxon>Betaproteobacteria</taxon>
        <taxon>Burkholderiales</taxon>
        <taxon>Sphaerotilaceae</taxon>
        <taxon>Leptothrix</taxon>
    </lineage>
</organism>
<feature type="chain" id="PRO_1000091111" description="UDP-N-acetylmuramate--L-alanine ligase">
    <location>
        <begin position="1"/>
        <end position="469"/>
    </location>
</feature>
<feature type="binding site" evidence="1">
    <location>
        <begin position="112"/>
        <end position="118"/>
    </location>
    <ligand>
        <name>ATP</name>
        <dbReference type="ChEBI" id="CHEBI:30616"/>
    </ligand>
</feature>
<comment type="function">
    <text evidence="1">Cell wall formation.</text>
</comment>
<comment type="catalytic activity">
    <reaction evidence="1">
        <text>UDP-N-acetyl-alpha-D-muramate + L-alanine + ATP = UDP-N-acetyl-alpha-D-muramoyl-L-alanine + ADP + phosphate + H(+)</text>
        <dbReference type="Rhea" id="RHEA:23372"/>
        <dbReference type="ChEBI" id="CHEBI:15378"/>
        <dbReference type="ChEBI" id="CHEBI:30616"/>
        <dbReference type="ChEBI" id="CHEBI:43474"/>
        <dbReference type="ChEBI" id="CHEBI:57972"/>
        <dbReference type="ChEBI" id="CHEBI:70757"/>
        <dbReference type="ChEBI" id="CHEBI:83898"/>
        <dbReference type="ChEBI" id="CHEBI:456216"/>
        <dbReference type="EC" id="6.3.2.8"/>
    </reaction>
</comment>
<comment type="pathway">
    <text evidence="1">Cell wall biogenesis; peptidoglycan biosynthesis.</text>
</comment>
<comment type="subcellular location">
    <subcellularLocation>
        <location evidence="1">Cytoplasm</location>
    </subcellularLocation>
</comment>
<comment type="similarity">
    <text evidence="1">Belongs to the MurCDEF family.</text>
</comment>
<accession>B1XYR4</accession>
<proteinExistence type="inferred from homology"/>
<gene>
    <name evidence="1" type="primary">murC</name>
    <name type="ordered locus">Lcho_0523</name>
</gene>
<dbReference type="EC" id="6.3.2.8" evidence="1"/>
<dbReference type="EMBL" id="CP001013">
    <property type="protein sequence ID" value="ACB32798.1"/>
    <property type="molecule type" value="Genomic_DNA"/>
</dbReference>
<dbReference type="RefSeq" id="WP_012345560.1">
    <property type="nucleotide sequence ID" value="NC_010524.1"/>
</dbReference>
<dbReference type="SMR" id="B1XYR4"/>
<dbReference type="STRING" id="395495.Lcho_0523"/>
<dbReference type="KEGG" id="lch:Lcho_0523"/>
<dbReference type="eggNOG" id="COG0773">
    <property type="taxonomic scope" value="Bacteria"/>
</dbReference>
<dbReference type="HOGENOM" id="CLU_028104_2_2_4"/>
<dbReference type="OrthoDB" id="9804126at2"/>
<dbReference type="UniPathway" id="UPA00219"/>
<dbReference type="Proteomes" id="UP000001693">
    <property type="component" value="Chromosome"/>
</dbReference>
<dbReference type="GO" id="GO:0005737">
    <property type="term" value="C:cytoplasm"/>
    <property type="evidence" value="ECO:0007669"/>
    <property type="project" value="UniProtKB-SubCell"/>
</dbReference>
<dbReference type="GO" id="GO:0005524">
    <property type="term" value="F:ATP binding"/>
    <property type="evidence" value="ECO:0007669"/>
    <property type="project" value="UniProtKB-UniRule"/>
</dbReference>
<dbReference type="GO" id="GO:0008763">
    <property type="term" value="F:UDP-N-acetylmuramate-L-alanine ligase activity"/>
    <property type="evidence" value="ECO:0007669"/>
    <property type="project" value="UniProtKB-UniRule"/>
</dbReference>
<dbReference type="GO" id="GO:0051301">
    <property type="term" value="P:cell division"/>
    <property type="evidence" value="ECO:0007669"/>
    <property type="project" value="UniProtKB-KW"/>
</dbReference>
<dbReference type="GO" id="GO:0071555">
    <property type="term" value="P:cell wall organization"/>
    <property type="evidence" value="ECO:0007669"/>
    <property type="project" value="UniProtKB-KW"/>
</dbReference>
<dbReference type="GO" id="GO:0009252">
    <property type="term" value="P:peptidoglycan biosynthetic process"/>
    <property type="evidence" value="ECO:0007669"/>
    <property type="project" value="UniProtKB-UniRule"/>
</dbReference>
<dbReference type="GO" id="GO:0008360">
    <property type="term" value="P:regulation of cell shape"/>
    <property type="evidence" value="ECO:0007669"/>
    <property type="project" value="UniProtKB-KW"/>
</dbReference>
<dbReference type="Gene3D" id="3.90.190.20">
    <property type="entry name" value="Mur ligase, C-terminal domain"/>
    <property type="match status" value="1"/>
</dbReference>
<dbReference type="Gene3D" id="3.40.1190.10">
    <property type="entry name" value="Mur-like, catalytic domain"/>
    <property type="match status" value="1"/>
</dbReference>
<dbReference type="Gene3D" id="3.40.50.720">
    <property type="entry name" value="NAD(P)-binding Rossmann-like Domain"/>
    <property type="match status" value="1"/>
</dbReference>
<dbReference type="HAMAP" id="MF_00046">
    <property type="entry name" value="MurC"/>
    <property type="match status" value="1"/>
</dbReference>
<dbReference type="InterPro" id="IPR036565">
    <property type="entry name" value="Mur-like_cat_sf"/>
</dbReference>
<dbReference type="InterPro" id="IPR004101">
    <property type="entry name" value="Mur_ligase_C"/>
</dbReference>
<dbReference type="InterPro" id="IPR036615">
    <property type="entry name" value="Mur_ligase_C_dom_sf"/>
</dbReference>
<dbReference type="InterPro" id="IPR013221">
    <property type="entry name" value="Mur_ligase_cen"/>
</dbReference>
<dbReference type="InterPro" id="IPR000713">
    <property type="entry name" value="Mur_ligase_N"/>
</dbReference>
<dbReference type="InterPro" id="IPR050061">
    <property type="entry name" value="MurCDEF_pg_biosynth"/>
</dbReference>
<dbReference type="InterPro" id="IPR005758">
    <property type="entry name" value="UDP-N-AcMur_Ala_ligase_MurC"/>
</dbReference>
<dbReference type="NCBIfam" id="TIGR01082">
    <property type="entry name" value="murC"/>
    <property type="match status" value="1"/>
</dbReference>
<dbReference type="PANTHER" id="PTHR43445:SF3">
    <property type="entry name" value="UDP-N-ACETYLMURAMATE--L-ALANINE LIGASE"/>
    <property type="match status" value="1"/>
</dbReference>
<dbReference type="PANTHER" id="PTHR43445">
    <property type="entry name" value="UDP-N-ACETYLMURAMATE--L-ALANINE LIGASE-RELATED"/>
    <property type="match status" value="1"/>
</dbReference>
<dbReference type="Pfam" id="PF01225">
    <property type="entry name" value="Mur_ligase"/>
    <property type="match status" value="1"/>
</dbReference>
<dbReference type="Pfam" id="PF02875">
    <property type="entry name" value="Mur_ligase_C"/>
    <property type="match status" value="1"/>
</dbReference>
<dbReference type="Pfam" id="PF08245">
    <property type="entry name" value="Mur_ligase_M"/>
    <property type="match status" value="1"/>
</dbReference>
<dbReference type="SUPFAM" id="SSF51984">
    <property type="entry name" value="MurCD N-terminal domain"/>
    <property type="match status" value="1"/>
</dbReference>
<dbReference type="SUPFAM" id="SSF53623">
    <property type="entry name" value="MurD-like peptide ligases, catalytic domain"/>
    <property type="match status" value="1"/>
</dbReference>
<dbReference type="SUPFAM" id="SSF53244">
    <property type="entry name" value="MurD-like peptide ligases, peptide-binding domain"/>
    <property type="match status" value="1"/>
</dbReference>
<evidence type="ECO:0000255" key="1">
    <source>
        <dbReference type="HAMAP-Rule" id="MF_00046"/>
    </source>
</evidence>
<name>MURC_LEPCP</name>
<keyword id="KW-0067">ATP-binding</keyword>
<keyword id="KW-0131">Cell cycle</keyword>
<keyword id="KW-0132">Cell division</keyword>
<keyword id="KW-0133">Cell shape</keyword>
<keyword id="KW-0961">Cell wall biogenesis/degradation</keyword>
<keyword id="KW-0963">Cytoplasm</keyword>
<keyword id="KW-0436">Ligase</keyword>
<keyword id="KW-0547">Nucleotide-binding</keyword>
<keyword id="KW-0573">Peptidoglycan synthesis</keyword>
<keyword id="KW-1185">Reference proteome</keyword>
<reference key="1">
    <citation type="submission" date="2008-03" db="EMBL/GenBank/DDBJ databases">
        <title>Complete sequence of Leptothrix cholodnii SP-6.</title>
        <authorList>
            <consortium name="US DOE Joint Genome Institute"/>
            <person name="Copeland A."/>
            <person name="Lucas S."/>
            <person name="Lapidus A."/>
            <person name="Glavina del Rio T."/>
            <person name="Dalin E."/>
            <person name="Tice H."/>
            <person name="Bruce D."/>
            <person name="Goodwin L."/>
            <person name="Pitluck S."/>
            <person name="Chertkov O."/>
            <person name="Brettin T."/>
            <person name="Detter J.C."/>
            <person name="Han C."/>
            <person name="Kuske C.R."/>
            <person name="Schmutz J."/>
            <person name="Larimer F."/>
            <person name="Land M."/>
            <person name="Hauser L."/>
            <person name="Kyrpides N."/>
            <person name="Lykidis A."/>
            <person name="Emerson D."/>
            <person name="Richardson P."/>
        </authorList>
    </citation>
    <scope>NUCLEOTIDE SEQUENCE [LARGE SCALE GENOMIC DNA]</scope>
    <source>
        <strain>ATCC 51168 / LMG 8142 / SP-6</strain>
    </source>
</reference>
<protein>
    <recommendedName>
        <fullName evidence="1">UDP-N-acetylmuramate--L-alanine ligase</fullName>
        <ecNumber evidence="1">6.3.2.8</ecNumber>
    </recommendedName>
    <alternativeName>
        <fullName evidence="1">UDP-N-acetylmuramoyl-L-alanine synthetase</fullName>
    </alternativeName>
</protein>
<sequence length="469" mass="49297">MKHAVKHIHFVGVGGAGMSGIAEILHNLGYTVSGSDQADGAVTRRLAELGIRIFVGHDAAHIAGAQAVVTSTAVKGDNPEVIAARAARIPVVPRAVMLAELMRLKSGIAIAGTHGKTTTTSLVTSVLAEAGLDPTFVIGGKLNSAGANSALGKGDYIVVEADESDASFLNLLPVLSVITNIDADHMDTYGHDFARLKQAFVEFLHKMPFYGAAILCGDDPGVRSIIPMISRPVITYGLGEDVQVRAVDVVALPGGQMRFTCQRRNGTVLPDLEITLNLPGVHSVRNALATIAVATELELPDAPIVSALAKFSGVGRRFQRWGDWPCAAGGEFTLIDDYGHHPVEMAAVIAAARGAFPGRRLVLAFQPHRYTRTRDCFEDFVKVMGSADAILLTEVYAAGEAPIVAADGRSLTRALRVAGKVDPLFVDDVNELPATIAEQALAGDVVIAMGAGTIGGVPARVVELVKERA</sequence>